<feature type="chain" id="PRO_1000011630" description="GTPase Der">
    <location>
        <begin position="1"/>
        <end position="436"/>
    </location>
</feature>
<feature type="domain" description="EngA-type G 1">
    <location>
        <begin position="4"/>
        <end position="167"/>
    </location>
</feature>
<feature type="domain" description="EngA-type G 2">
    <location>
        <begin position="176"/>
        <end position="351"/>
    </location>
</feature>
<feature type="domain" description="KH-like" evidence="1">
    <location>
        <begin position="352"/>
        <end position="436"/>
    </location>
</feature>
<feature type="binding site" evidence="1">
    <location>
        <begin position="10"/>
        <end position="17"/>
    </location>
    <ligand>
        <name>GTP</name>
        <dbReference type="ChEBI" id="CHEBI:37565"/>
        <label>1</label>
    </ligand>
</feature>
<feature type="binding site" evidence="1">
    <location>
        <begin position="57"/>
        <end position="61"/>
    </location>
    <ligand>
        <name>GTP</name>
        <dbReference type="ChEBI" id="CHEBI:37565"/>
        <label>1</label>
    </ligand>
</feature>
<feature type="binding site" evidence="1">
    <location>
        <begin position="119"/>
        <end position="122"/>
    </location>
    <ligand>
        <name>GTP</name>
        <dbReference type="ChEBI" id="CHEBI:37565"/>
        <label>1</label>
    </ligand>
</feature>
<feature type="binding site" evidence="1">
    <location>
        <begin position="182"/>
        <end position="189"/>
    </location>
    <ligand>
        <name>GTP</name>
        <dbReference type="ChEBI" id="CHEBI:37565"/>
        <label>2</label>
    </ligand>
</feature>
<feature type="binding site" evidence="1">
    <location>
        <begin position="229"/>
        <end position="233"/>
    </location>
    <ligand>
        <name>GTP</name>
        <dbReference type="ChEBI" id="CHEBI:37565"/>
        <label>2</label>
    </ligand>
</feature>
<feature type="binding site" evidence="1">
    <location>
        <begin position="294"/>
        <end position="297"/>
    </location>
    <ligand>
        <name>GTP</name>
        <dbReference type="ChEBI" id="CHEBI:37565"/>
        <label>2</label>
    </ligand>
</feature>
<keyword id="KW-0342">GTP-binding</keyword>
<keyword id="KW-0547">Nucleotide-binding</keyword>
<keyword id="KW-1185">Reference proteome</keyword>
<keyword id="KW-0677">Repeat</keyword>
<keyword id="KW-0690">Ribosome biogenesis</keyword>
<proteinExistence type="inferred from homology"/>
<gene>
    <name evidence="1" type="primary">der</name>
    <name type="synonym">engA</name>
    <name type="ordered locus">GK2221</name>
</gene>
<evidence type="ECO:0000255" key="1">
    <source>
        <dbReference type="HAMAP-Rule" id="MF_00195"/>
    </source>
</evidence>
<name>DER_GEOKA</name>
<dbReference type="EMBL" id="BA000043">
    <property type="protein sequence ID" value="BAD76506.1"/>
    <property type="molecule type" value="Genomic_DNA"/>
</dbReference>
<dbReference type="RefSeq" id="WP_011231705.1">
    <property type="nucleotide sequence ID" value="NC_006510.1"/>
</dbReference>
<dbReference type="SMR" id="Q5KXT0"/>
<dbReference type="STRING" id="235909.GK2221"/>
<dbReference type="GeneID" id="32064073"/>
<dbReference type="KEGG" id="gka:GK2221"/>
<dbReference type="eggNOG" id="COG1160">
    <property type="taxonomic scope" value="Bacteria"/>
</dbReference>
<dbReference type="HOGENOM" id="CLU_016077_6_2_9"/>
<dbReference type="Proteomes" id="UP000001172">
    <property type="component" value="Chromosome"/>
</dbReference>
<dbReference type="GO" id="GO:0005525">
    <property type="term" value="F:GTP binding"/>
    <property type="evidence" value="ECO:0007669"/>
    <property type="project" value="UniProtKB-UniRule"/>
</dbReference>
<dbReference type="GO" id="GO:0043022">
    <property type="term" value="F:ribosome binding"/>
    <property type="evidence" value="ECO:0007669"/>
    <property type="project" value="TreeGrafter"/>
</dbReference>
<dbReference type="GO" id="GO:0042254">
    <property type="term" value="P:ribosome biogenesis"/>
    <property type="evidence" value="ECO:0007669"/>
    <property type="project" value="UniProtKB-KW"/>
</dbReference>
<dbReference type="CDD" id="cd01894">
    <property type="entry name" value="EngA1"/>
    <property type="match status" value="1"/>
</dbReference>
<dbReference type="CDD" id="cd01895">
    <property type="entry name" value="EngA2"/>
    <property type="match status" value="1"/>
</dbReference>
<dbReference type="FunFam" id="3.30.300.20:FF:000004">
    <property type="entry name" value="GTPase Der"/>
    <property type="match status" value="1"/>
</dbReference>
<dbReference type="FunFam" id="3.40.50.300:FF:000040">
    <property type="entry name" value="GTPase Der"/>
    <property type="match status" value="1"/>
</dbReference>
<dbReference type="FunFam" id="3.40.50.300:FF:000057">
    <property type="entry name" value="GTPase Der"/>
    <property type="match status" value="1"/>
</dbReference>
<dbReference type="Gene3D" id="3.30.300.20">
    <property type="match status" value="1"/>
</dbReference>
<dbReference type="Gene3D" id="3.40.50.300">
    <property type="entry name" value="P-loop containing nucleotide triphosphate hydrolases"/>
    <property type="match status" value="2"/>
</dbReference>
<dbReference type="HAMAP" id="MF_00195">
    <property type="entry name" value="GTPase_Der"/>
    <property type="match status" value="1"/>
</dbReference>
<dbReference type="InterPro" id="IPR031166">
    <property type="entry name" value="G_ENGA"/>
</dbReference>
<dbReference type="InterPro" id="IPR006073">
    <property type="entry name" value="GTP-bd"/>
</dbReference>
<dbReference type="InterPro" id="IPR016484">
    <property type="entry name" value="GTPase_Der"/>
</dbReference>
<dbReference type="InterPro" id="IPR032859">
    <property type="entry name" value="KH_dom-like"/>
</dbReference>
<dbReference type="InterPro" id="IPR015946">
    <property type="entry name" value="KH_dom-like_a/b"/>
</dbReference>
<dbReference type="InterPro" id="IPR027417">
    <property type="entry name" value="P-loop_NTPase"/>
</dbReference>
<dbReference type="InterPro" id="IPR005225">
    <property type="entry name" value="Small_GTP-bd"/>
</dbReference>
<dbReference type="NCBIfam" id="TIGR03594">
    <property type="entry name" value="GTPase_EngA"/>
    <property type="match status" value="1"/>
</dbReference>
<dbReference type="NCBIfam" id="TIGR00231">
    <property type="entry name" value="small_GTP"/>
    <property type="match status" value="2"/>
</dbReference>
<dbReference type="PANTHER" id="PTHR43834">
    <property type="entry name" value="GTPASE DER"/>
    <property type="match status" value="1"/>
</dbReference>
<dbReference type="PANTHER" id="PTHR43834:SF6">
    <property type="entry name" value="GTPASE DER"/>
    <property type="match status" value="1"/>
</dbReference>
<dbReference type="Pfam" id="PF14714">
    <property type="entry name" value="KH_dom-like"/>
    <property type="match status" value="1"/>
</dbReference>
<dbReference type="Pfam" id="PF01926">
    <property type="entry name" value="MMR_HSR1"/>
    <property type="match status" value="2"/>
</dbReference>
<dbReference type="PIRSF" id="PIRSF006485">
    <property type="entry name" value="GTP-binding_EngA"/>
    <property type="match status" value="1"/>
</dbReference>
<dbReference type="SUPFAM" id="SSF52540">
    <property type="entry name" value="P-loop containing nucleoside triphosphate hydrolases"/>
    <property type="match status" value="2"/>
</dbReference>
<dbReference type="PROSITE" id="PS51712">
    <property type="entry name" value="G_ENGA"/>
    <property type="match status" value="2"/>
</dbReference>
<protein>
    <recommendedName>
        <fullName evidence="1">GTPase Der</fullName>
    </recommendedName>
    <alternativeName>
        <fullName evidence="1">GTP-binding protein EngA</fullName>
    </alternativeName>
</protein>
<sequence>MANPVVAIVGRPNVGKSTIFNRIVGERISIVEDVPGVTRDRIYSRAEWLNHSFYLIDTGGIDIGDEPLLVQIRQQAEIAIDEADVIIFMTNGRDGVTAADEEVAKLLRRSNKPVVLAVNKIDNPEMRDLIYDFYALGFGEPYPISGAHGTGLGDLLDAVVRHFPKGGGQEYEEDVIKFCLIGRPNVGKSSLVNAILGEERVIVSDIAGTTRDAVDTSFVREGQEYVIIDTAGMRKRGKIYESTEKYSVLRALRAIERSDVVLVVLNAEEGIIEQDKKIAGYAHEAGRGVILIVNKWDAIEKDDKTMVEFERKIRDHFPFLDYAPILFVSAKTKQRLHKLLPLVRLVSDNHAMRVQTNVLNEVIMDAVAMNPTPTHNGRRLKVYYMTQVAVKPPTFVAFVNDPELMHFSYERFLENRIRDAFGFEGTPIKIIARPRK</sequence>
<reference key="1">
    <citation type="journal article" date="2004" name="Nucleic Acids Res.">
        <title>Thermoadaptation trait revealed by the genome sequence of thermophilic Geobacillus kaustophilus.</title>
        <authorList>
            <person name="Takami H."/>
            <person name="Takaki Y."/>
            <person name="Chee G.-J."/>
            <person name="Nishi S."/>
            <person name="Shimamura S."/>
            <person name="Suzuki H."/>
            <person name="Matsui S."/>
            <person name="Uchiyama I."/>
        </authorList>
    </citation>
    <scope>NUCLEOTIDE SEQUENCE [LARGE SCALE GENOMIC DNA]</scope>
    <source>
        <strain>HTA426</strain>
    </source>
</reference>
<organism>
    <name type="scientific">Geobacillus kaustophilus (strain HTA426)</name>
    <dbReference type="NCBI Taxonomy" id="235909"/>
    <lineage>
        <taxon>Bacteria</taxon>
        <taxon>Bacillati</taxon>
        <taxon>Bacillota</taxon>
        <taxon>Bacilli</taxon>
        <taxon>Bacillales</taxon>
        <taxon>Anoxybacillaceae</taxon>
        <taxon>Geobacillus</taxon>
        <taxon>Geobacillus thermoleovorans group</taxon>
    </lineage>
</organism>
<accession>Q5KXT0</accession>
<comment type="function">
    <text evidence="1">GTPase that plays an essential role in the late steps of ribosome biogenesis.</text>
</comment>
<comment type="subunit">
    <text evidence="1">Associates with the 50S ribosomal subunit.</text>
</comment>
<comment type="similarity">
    <text evidence="1">Belongs to the TRAFAC class TrmE-Era-EngA-EngB-Septin-like GTPase superfamily. EngA (Der) GTPase family.</text>
</comment>